<evidence type="ECO:0000250" key="1"/>
<evidence type="ECO:0000256" key="2">
    <source>
        <dbReference type="SAM" id="MobiDB-lite"/>
    </source>
</evidence>
<evidence type="ECO:0000305" key="3"/>
<accession>Q9BPB3</accession>
<sequence>NPASCCSCADVDPGRASRKTPKGEDQVFIKEKDRC</sequence>
<keyword id="KW-0165">Cleavage on pair of basic residues</keyword>
<keyword id="KW-1015">Disulfide bond</keyword>
<keyword id="KW-0528">Neurotoxin</keyword>
<keyword id="KW-0964">Secreted</keyword>
<keyword id="KW-0800">Toxin</keyword>
<dbReference type="EMBL" id="AF215022">
    <property type="protein sequence ID" value="AAG60450.1"/>
    <property type="molecule type" value="mRNA"/>
</dbReference>
<dbReference type="ConoServer" id="709">
    <property type="toxin name" value="TxMEKL-0422 precursor (scaffold VI/VII)"/>
</dbReference>
<dbReference type="GO" id="GO:0005576">
    <property type="term" value="C:extracellular region"/>
    <property type="evidence" value="ECO:0007669"/>
    <property type="project" value="UniProtKB-SubCell"/>
</dbReference>
<dbReference type="GO" id="GO:0090729">
    <property type="term" value="F:toxin activity"/>
    <property type="evidence" value="ECO:0007669"/>
    <property type="project" value="UniProtKB-KW"/>
</dbReference>
<reference key="1">
    <citation type="journal article" date="2001" name="Mol. Biol. Evol.">
        <title>Mechanisms for evolving hypervariability: the case of conopeptides.</title>
        <authorList>
            <person name="Conticello S.G."/>
            <person name="Gilad Y."/>
            <person name="Avidan N."/>
            <person name="Ben-Asher E."/>
            <person name="Levy Z."/>
            <person name="Fainzilber M."/>
        </authorList>
    </citation>
    <scope>NUCLEOTIDE SEQUENCE [MRNA]</scope>
    <source>
        <tissue>Venom duct</tissue>
    </source>
</reference>
<name>CUU2_CONTE</name>
<comment type="subcellular location">
    <subcellularLocation>
        <location evidence="1">Secreted</location>
    </subcellularLocation>
</comment>
<comment type="tissue specificity">
    <text evidence="3">Expressed by the venom duct.</text>
</comment>
<comment type="PTM">
    <text evidence="3">Contains disulfide bonds.</text>
</comment>
<protein>
    <recommendedName>
        <fullName>Conotoxin TxMEKL-0422</fullName>
    </recommendedName>
</protein>
<feature type="peptide" id="PRO_0000404982" description="Conotoxin TxMEKL-0422">
    <location>
        <begin position="1" status="less than"/>
        <end position="35"/>
    </location>
</feature>
<feature type="region of interest" description="Disordered" evidence="2">
    <location>
        <begin position="1"/>
        <end position="35"/>
    </location>
</feature>
<feature type="compositionally biased region" description="Basic and acidic residues" evidence="2">
    <location>
        <begin position="21"/>
        <end position="35"/>
    </location>
</feature>
<feature type="non-terminal residue">
    <location>
        <position position="1"/>
    </location>
</feature>
<proteinExistence type="evidence at transcript level"/>
<organism>
    <name type="scientific">Conus textile</name>
    <name type="common">Cloth-of-gold cone</name>
    <dbReference type="NCBI Taxonomy" id="6494"/>
    <lineage>
        <taxon>Eukaryota</taxon>
        <taxon>Metazoa</taxon>
        <taxon>Spiralia</taxon>
        <taxon>Lophotrochozoa</taxon>
        <taxon>Mollusca</taxon>
        <taxon>Gastropoda</taxon>
        <taxon>Caenogastropoda</taxon>
        <taxon>Neogastropoda</taxon>
        <taxon>Conoidea</taxon>
        <taxon>Conidae</taxon>
        <taxon>Conus</taxon>
        <taxon>Cylinder</taxon>
    </lineage>
</organism>